<protein>
    <recommendedName>
        <fullName evidence="1">L-lactate dehydrogenase</fullName>
        <shortName evidence="1">L-LDH</shortName>
        <ecNumber evidence="1">1.1.1.27</ecNumber>
    </recommendedName>
</protein>
<sequence>MDKKIKRVAMVGAGLVGVSVLYSCMNRGLAEQYGIIDINDKLSVGHSLDFEDASAANNHNFSVGKIEYSDLKDYDVVVITAGRPQKPGETRLEMVADNAKIMSNIAKNIKKSGFKGVSIVVANPVDVMTFIYQHETGFDKNRVISSGTSLDSARLRFEISKKLKVHPKSVQAFVLGEHGDSSVSVYSAATVSGKSFNEIVKERGISKKELEDMHTTVYKKAYEIINRKGSTYFGIGSTVAELVEAILTDSHAIFGVGVYLTGQYGVKDLYIGVPTVLGSKGVVEVINFNLTKEEQEKFVSSATILKGNIQKALEAIKG</sequence>
<name>LDH_MYCM1</name>
<evidence type="ECO:0000255" key="1">
    <source>
        <dbReference type="HAMAP-Rule" id="MF_00488"/>
    </source>
</evidence>
<organism>
    <name type="scientific">Mycoplasma mobile (strain ATCC 43663 / 163K / NCTC 11711)</name>
    <name type="common">Mesomycoplasma mobile</name>
    <dbReference type="NCBI Taxonomy" id="267748"/>
    <lineage>
        <taxon>Bacteria</taxon>
        <taxon>Bacillati</taxon>
        <taxon>Mycoplasmatota</taxon>
        <taxon>Mycoplasmoidales</taxon>
        <taxon>Metamycoplasmataceae</taxon>
        <taxon>Mesomycoplasma</taxon>
    </lineage>
</organism>
<proteinExistence type="inferred from homology"/>
<gene>
    <name evidence="1" type="primary">ldh</name>
    <name type="ordered locus">MMOB0410</name>
</gene>
<dbReference type="EC" id="1.1.1.27" evidence="1"/>
<dbReference type="EMBL" id="AE017308">
    <property type="protein sequence ID" value="AAT27527.1"/>
    <property type="molecule type" value="Genomic_DNA"/>
</dbReference>
<dbReference type="RefSeq" id="WP_011264561.1">
    <property type="nucleotide sequence ID" value="NC_006908.1"/>
</dbReference>
<dbReference type="SMR" id="Q6KIP9"/>
<dbReference type="STRING" id="267748.MMOB0410"/>
<dbReference type="KEGG" id="mmo:MMOB0410"/>
<dbReference type="eggNOG" id="COG0039">
    <property type="taxonomic scope" value="Bacteria"/>
</dbReference>
<dbReference type="HOGENOM" id="CLU_045401_1_2_14"/>
<dbReference type="OrthoDB" id="9802969at2"/>
<dbReference type="UniPathway" id="UPA00554">
    <property type="reaction ID" value="UER00611"/>
</dbReference>
<dbReference type="Proteomes" id="UP000009072">
    <property type="component" value="Chromosome"/>
</dbReference>
<dbReference type="GO" id="GO:0005737">
    <property type="term" value="C:cytoplasm"/>
    <property type="evidence" value="ECO:0007669"/>
    <property type="project" value="UniProtKB-SubCell"/>
</dbReference>
<dbReference type="GO" id="GO:0004459">
    <property type="term" value="F:L-lactate dehydrogenase activity"/>
    <property type="evidence" value="ECO:0007669"/>
    <property type="project" value="UniProtKB-UniRule"/>
</dbReference>
<dbReference type="GO" id="GO:0006096">
    <property type="term" value="P:glycolytic process"/>
    <property type="evidence" value="ECO:0007669"/>
    <property type="project" value="UniProtKB-UniRule"/>
</dbReference>
<dbReference type="GO" id="GO:0006089">
    <property type="term" value="P:lactate metabolic process"/>
    <property type="evidence" value="ECO:0007669"/>
    <property type="project" value="TreeGrafter"/>
</dbReference>
<dbReference type="CDD" id="cd05291">
    <property type="entry name" value="HicDH_like"/>
    <property type="match status" value="1"/>
</dbReference>
<dbReference type="Gene3D" id="3.90.110.10">
    <property type="entry name" value="Lactate dehydrogenase/glycoside hydrolase, family 4, C-terminal"/>
    <property type="match status" value="1"/>
</dbReference>
<dbReference type="Gene3D" id="3.40.50.720">
    <property type="entry name" value="NAD(P)-binding Rossmann-like Domain"/>
    <property type="match status" value="1"/>
</dbReference>
<dbReference type="HAMAP" id="MF_00488">
    <property type="entry name" value="Lactate_dehydrog"/>
    <property type="match status" value="1"/>
</dbReference>
<dbReference type="InterPro" id="IPR001557">
    <property type="entry name" value="L-lactate/malate_DH"/>
</dbReference>
<dbReference type="InterPro" id="IPR011304">
    <property type="entry name" value="L-lactate_DH"/>
</dbReference>
<dbReference type="InterPro" id="IPR018177">
    <property type="entry name" value="L-lactate_DH_AS"/>
</dbReference>
<dbReference type="InterPro" id="IPR022383">
    <property type="entry name" value="Lactate/malate_DH_C"/>
</dbReference>
<dbReference type="InterPro" id="IPR001236">
    <property type="entry name" value="Lactate/malate_DH_N"/>
</dbReference>
<dbReference type="InterPro" id="IPR015955">
    <property type="entry name" value="Lactate_DH/Glyco_Ohase_4_C"/>
</dbReference>
<dbReference type="InterPro" id="IPR036291">
    <property type="entry name" value="NAD(P)-bd_dom_sf"/>
</dbReference>
<dbReference type="NCBIfam" id="TIGR01771">
    <property type="entry name" value="L-LDH-NAD"/>
    <property type="match status" value="1"/>
</dbReference>
<dbReference type="NCBIfam" id="NF000824">
    <property type="entry name" value="PRK00066.1"/>
    <property type="match status" value="1"/>
</dbReference>
<dbReference type="PANTHER" id="PTHR43128">
    <property type="entry name" value="L-2-HYDROXYCARBOXYLATE DEHYDROGENASE (NAD(P)(+))"/>
    <property type="match status" value="1"/>
</dbReference>
<dbReference type="PANTHER" id="PTHR43128:SF16">
    <property type="entry name" value="L-LACTATE DEHYDROGENASE"/>
    <property type="match status" value="1"/>
</dbReference>
<dbReference type="Pfam" id="PF02866">
    <property type="entry name" value="Ldh_1_C"/>
    <property type="match status" value="1"/>
</dbReference>
<dbReference type="Pfam" id="PF00056">
    <property type="entry name" value="Ldh_1_N"/>
    <property type="match status" value="1"/>
</dbReference>
<dbReference type="PIRSF" id="PIRSF000102">
    <property type="entry name" value="Lac_mal_DH"/>
    <property type="match status" value="1"/>
</dbReference>
<dbReference type="PRINTS" id="PR00086">
    <property type="entry name" value="LLDHDRGNASE"/>
</dbReference>
<dbReference type="SUPFAM" id="SSF56327">
    <property type="entry name" value="LDH C-terminal domain-like"/>
    <property type="match status" value="1"/>
</dbReference>
<dbReference type="SUPFAM" id="SSF51735">
    <property type="entry name" value="NAD(P)-binding Rossmann-fold domains"/>
    <property type="match status" value="1"/>
</dbReference>
<dbReference type="PROSITE" id="PS00064">
    <property type="entry name" value="L_LDH"/>
    <property type="match status" value="1"/>
</dbReference>
<reference key="1">
    <citation type="journal article" date="2004" name="Genome Res.">
        <title>The complete genome and proteome of Mycoplasma mobile.</title>
        <authorList>
            <person name="Jaffe J.D."/>
            <person name="Stange-Thomann N."/>
            <person name="Smith C."/>
            <person name="DeCaprio D."/>
            <person name="Fisher S."/>
            <person name="Butler J."/>
            <person name="Calvo S."/>
            <person name="Elkins T."/>
            <person name="FitzGerald M.G."/>
            <person name="Hafez N."/>
            <person name="Kodira C.D."/>
            <person name="Major J."/>
            <person name="Wang S."/>
            <person name="Wilkinson J."/>
            <person name="Nicol R."/>
            <person name="Nusbaum C."/>
            <person name="Birren B."/>
            <person name="Berg H.C."/>
            <person name="Church G.M."/>
        </authorList>
    </citation>
    <scope>NUCLEOTIDE SEQUENCE [LARGE SCALE GENOMIC DNA]</scope>
    <source>
        <strain>ATCC 43663 / NCTC 11711 / 163 K</strain>
    </source>
</reference>
<keyword id="KW-0963">Cytoplasm</keyword>
<keyword id="KW-0520">NAD</keyword>
<keyword id="KW-0560">Oxidoreductase</keyword>
<keyword id="KW-0597">Phosphoprotein</keyword>
<keyword id="KW-1185">Reference proteome</keyword>
<feature type="chain" id="PRO_0000237554" description="L-lactate dehydrogenase">
    <location>
        <begin position="1"/>
        <end position="318"/>
    </location>
</feature>
<feature type="active site" description="Proton acceptor" evidence="1">
    <location>
        <position position="178"/>
    </location>
</feature>
<feature type="binding site" evidence="1">
    <location>
        <position position="16"/>
    </location>
    <ligand>
        <name>NAD(+)</name>
        <dbReference type="ChEBI" id="CHEBI:57540"/>
    </ligand>
</feature>
<feature type="binding site" evidence="1">
    <location>
        <position position="37"/>
    </location>
    <ligand>
        <name>NAD(+)</name>
        <dbReference type="ChEBI" id="CHEBI:57540"/>
    </ligand>
</feature>
<feature type="binding site" evidence="1">
    <location>
        <position position="68"/>
    </location>
    <ligand>
        <name>NAD(+)</name>
        <dbReference type="ChEBI" id="CHEBI:57540"/>
    </ligand>
</feature>
<feature type="binding site" evidence="1">
    <location>
        <position position="85"/>
    </location>
    <ligand>
        <name>substrate</name>
    </ligand>
</feature>
<feature type="binding site" evidence="1">
    <location>
        <position position="91"/>
    </location>
    <ligand>
        <name>substrate</name>
    </ligand>
</feature>
<feature type="binding site" evidence="1">
    <location>
        <begin position="121"/>
        <end position="123"/>
    </location>
    <ligand>
        <name>NAD(+)</name>
        <dbReference type="ChEBI" id="CHEBI:57540"/>
    </ligand>
</feature>
<feature type="binding site" evidence="1">
    <location>
        <begin position="123"/>
        <end position="126"/>
    </location>
    <ligand>
        <name>substrate</name>
    </ligand>
</feature>
<feature type="binding site" evidence="1">
    <location>
        <position position="146"/>
    </location>
    <ligand>
        <name>NAD(+)</name>
        <dbReference type="ChEBI" id="CHEBI:57540"/>
    </ligand>
</feature>
<feature type="binding site" evidence="1">
    <location>
        <begin position="151"/>
        <end position="154"/>
    </location>
    <ligand>
        <name>substrate</name>
    </ligand>
</feature>
<feature type="binding site" evidence="1">
    <location>
        <position position="231"/>
    </location>
    <ligand>
        <name>substrate</name>
    </ligand>
</feature>
<feature type="modified residue" description="Phosphotyrosine" evidence="1">
    <location>
        <position position="222"/>
    </location>
</feature>
<comment type="function">
    <text evidence="1">Catalyzes the conversion of lactate to pyruvate.</text>
</comment>
<comment type="catalytic activity">
    <reaction evidence="1">
        <text>(S)-lactate + NAD(+) = pyruvate + NADH + H(+)</text>
        <dbReference type="Rhea" id="RHEA:23444"/>
        <dbReference type="ChEBI" id="CHEBI:15361"/>
        <dbReference type="ChEBI" id="CHEBI:15378"/>
        <dbReference type="ChEBI" id="CHEBI:16651"/>
        <dbReference type="ChEBI" id="CHEBI:57540"/>
        <dbReference type="ChEBI" id="CHEBI:57945"/>
        <dbReference type="EC" id="1.1.1.27"/>
    </reaction>
</comment>
<comment type="pathway">
    <text evidence="1">Fermentation; pyruvate fermentation to lactate; (S)-lactate from pyruvate: step 1/1.</text>
</comment>
<comment type="subunit">
    <text evidence="1">Homotetramer.</text>
</comment>
<comment type="subcellular location">
    <subcellularLocation>
        <location evidence="1">Cytoplasm</location>
    </subcellularLocation>
</comment>
<comment type="similarity">
    <text evidence="1">Belongs to the LDH/MDH superfamily. LDH family.</text>
</comment>
<accession>Q6KIP9</accession>